<protein>
    <recommendedName>
        <fullName>Putative 8-amino-7-oxononanoate synthase</fullName>
        <shortName>AONS</shortName>
        <ecNumber>2.3.1.47</ecNumber>
    </recommendedName>
    <alternativeName>
        <fullName>7-keto-8-amino-pelargonic acid synthase</fullName>
        <shortName>7-KAP synthase</shortName>
    </alternativeName>
    <alternativeName>
        <fullName>8-amino-7-ketopelargonate synthase</fullName>
    </alternativeName>
</protein>
<name>BIOF_NEIMA</name>
<gene>
    <name type="primary">bioF</name>
    <name type="ordered locus">NMA2013</name>
</gene>
<dbReference type="EC" id="2.3.1.47"/>
<dbReference type="EMBL" id="AL157959">
    <property type="protein sequence ID" value="CAM09118.1"/>
    <property type="molecule type" value="Genomic_DNA"/>
</dbReference>
<dbReference type="PIR" id="H81830">
    <property type="entry name" value="H81830"/>
</dbReference>
<dbReference type="RefSeq" id="WP_002245921.1">
    <property type="nucleotide sequence ID" value="NC_003116.1"/>
</dbReference>
<dbReference type="SMR" id="A1ITK1"/>
<dbReference type="EnsemblBacteria" id="CAM09118">
    <property type="protein sequence ID" value="CAM09118"/>
    <property type="gene ID" value="NMA2013"/>
</dbReference>
<dbReference type="GeneID" id="93387568"/>
<dbReference type="KEGG" id="nma:NMA2013"/>
<dbReference type="HOGENOM" id="CLU_015846_11_2_4"/>
<dbReference type="UniPathway" id="UPA00078"/>
<dbReference type="Proteomes" id="UP000000626">
    <property type="component" value="Chromosome"/>
</dbReference>
<dbReference type="GO" id="GO:0008710">
    <property type="term" value="F:8-amino-7-oxononanoate synthase activity"/>
    <property type="evidence" value="ECO:0007669"/>
    <property type="project" value="UniProtKB-EC"/>
</dbReference>
<dbReference type="GO" id="GO:0030170">
    <property type="term" value="F:pyridoxal phosphate binding"/>
    <property type="evidence" value="ECO:0007669"/>
    <property type="project" value="InterPro"/>
</dbReference>
<dbReference type="GO" id="GO:0009102">
    <property type="term" value="P:biotin biosynthetic process"/>
    <property type="evidence" value="ECO:0007669"/>
    <property type="project" value="UniProtKB-UniPathway"/>
</dbReference>
<dbReference type="CDD" id="cd06454">
    <property type="entry name" value="KBL_like"/>
    <property type="match status" value="1"/>
</dbReference>
<dbReference type="Gene3D" id="3.90.1150.10">
    <property type="entry name" value="Aspartate Aminotransferase, domain 1"/>
    <property type="match status" value="1"/>
</dbReference>
<dbReference type="Gene3D" id="3.40.640.10">
    <property type="entry name" value="Type I PLP-dependent aspartate aminotransferase-like (Major domain)"/>
    <property type="match status" value="1"/>
</dbReference>
<dbReference type="InterPro" id="IPR001917">
    <property type="entry name" value="Aminotrans_II_pyridoxalP_BS"/>
</dbReference>
<dbReference type="InterPro" id="IPR004839">
    <property type="entry name" value="Aminotransferase_I/II_large"/>
</dbReference>
<dbReference type="InterPro" id="IPR050087">
    <property type="entry name" value="AON_synthase_class-II"/>
</dbReference>
<dbReference type="InterPro" id="IPR004723">
    <property type="entry name" value="AONS_Archaea/Proteobacteria"/>
</dbReference>
<dbReference type="InterPro" id="IPR015424">
    <property type="entry name" value="PyrdxlP-dep_Trfase"/>
</dbReference>
<dbReference type="InterPro" id="IPR015421">
    <property type="entry name" value="PyrdxlP-dep_Trfase_major"/>
</dbReference>
<dbReference type="InterPro" id="IPR015422">
    <property type="entry name" value="PyrdxlP-dep_Trfase_small"/>
</dbReference>
<dbReference type="NCBIfam" id="TIGR00858">
    <property type="entry name" value="bioF"/>
    <property type="match status" value="1"/>
</dbReference>
<dbReference type="PANTHER" id="PTHR13693:SF100">
    <property type="entry name" value="8-AMINO-7-OXONONANOATE SYNTHASE"/>
    <property type="match status" value="1"/>
</dbReference>
<dbReference type="PANTHER" id="PTHR13693">
    <property type="entry name" value="CLASS II AMINOTRANSFERASE/8-AMINO-7-OXONONANOATE SYNTHASE"/>
    <property type="match status" value="1"/>
</dbReference>
<dbReference type="Pfam" id="PF00155">
    <property type="entry name" value="Aminotran_1_2"/>
    <property type="match status" value="1"/>
</dbReference>
<dbReference type="SUPFAM" id="SSF53383">
    <property type="entry name" value="PLP-dependent transferases"/>
    <property type="match status" value="1"/>
</dbReference>
<dbReference type="PROSITE" id="PS00599">
    <property type="entry name" value="AA_TRANSFER_CLASS_2"/>
    <property type="match status" value="1"/>
</dbReference>
<organism>
    <name type="scientific">Neisseria meningitidis serogroup A / serotype 4A (strain DSM 15465 / Z2491)</name>
    <dbReference type="NCBI Taxonomy" id="122587"/>
    <lineage>
        <taxon>Bacteria</taxon>
        <taxon>Pseudomonadati</taxon>
        <taxon>Pseudomonadota</taxon>
        <taxon>Betaproteobacteria</taxon>
        <taxon>Neisseriales</taxon>
        <taxon>Neisseriaceae</taxon>
        <taxon>Neisseria</taxon>
    </lineage>
</organism>
<evidence type="ECO:0000250" key="1"/>
<evidence type="ECO:0000305" key="2"/>
<comment type="function">
    <text evidence="1">Catalyzes the decarboxylative condensation of pimeloyl-[acyl-carrier protein] and L-alanine to produce 8-amino-7-oxononanoate (AON), [acyl-carrier protein], and carbon dioxide.</text>
</comment>
<comment type="catalytic activity">
    <reaction>
        <text>6-carboxyhexanoyl-[ACP] + L-alanine + H(+) = (8S)-8-amino-7-oxononanoate + holo-[ACP] + CO2</text>
        <dbReference type="Rhea" id="RHEA:42288"/>
        <dbReference type="Rhea" id="RHEA-COMP:9685"/>
        <dbReference type="Rhea" id="RHEA-COMP:9955"/>
        <dbReference type="ChEBI" id="CHEBI:15378"/>
        <dbReference type="ChEBI" id="CHEBI:16526"/>
        <dbReference type="ChEBI" id="CHEBI:57972"/>
        <dbReference type="ChEBI" id="CHEBI:64479"/>
        <dbReference type="ChEBI" id="CHEBI:78846"/>
        <dbReference type="ChEBI" id="CHEBI:149468"/>
        <dbReference type="EC" id="2.3.1.47"/>
    </reaction>
</comment>
<comment type="cofactor">
    <cofactor evidence="1">
        <name>pyridoxal 5'-phosphate</name>
        <dbReference type="ChEBI" id="CHEBI:597326"/>
    </cofactor>
</comment>
<comment type="pathway">
    <text>Cofactor biosynthesis; biotin biosynthesis.</text>
</comment>
<comment type="subunit">
    <text evidence="1">Homodimer.</text>
</comment>
<comment type="similarity">
    <text evidence="2">Belongs to the class-II pyridoxal-phosphate-dependent aminotransferase family. BioF subfamily.</text>
</comment>
<keyword id="KW-0093">Biotin biosynthesis</keyword>
<keyword id="KW-0663">Pyridoxal phosphate</keyword>
<keyword id="KW-0808">Transferase</keyword>
<feature type="chain" id="PRO_0000381051" description="Putative 8-amino-7-oxononanoate synthase">
    <location>
        <begin position="1"/>
        <end position="380"/>
    </location>
</feature>
<feature type="binding site" evidence="1">
    <location>
        <position position="18"/>
    </location>
    <ligand>
        <name>substrate</name>
    </ligand>
</feature>
<feature type="binding site" evidence="1">
    <location>
        <begin position="106"/>
        <end position="107"/>
    </location>
    <ligand>
        <name>pyridoxal 5'-phosphate</name>
        <dbReference type="ChEBI" id="CHEBI:597326"/>
    </ligand>
</feature>
<feature type="binding site" evidence="1">
    <location>
        <position position="131"/>
    </location>
    <ligand>
        <name>substrate</name>
    </ligand>
</feature>
<feature type="binding site" evidence="1">
    <location>
        <position position="179"/>
    </location>
    <ligand>
        <name>pyridoxal 5'-phosphate</name>
        <dbReference type="ChEBI" id="CHEBI:597326"/>
    </ligand>
</feature>
<feature type="binding site" evidence="1">
    <location>
        <begin position="205"/>
        <end position="208"/>
    </location>
    <ligand>
        <name>pyridoxal 5'-phosphate</name>
        <dbReference type="ChEBI" id="CHEBI:597326"/>
    </ligand>
</feature>
<feature type="binding site" evidence="1">
    <location>
        <begin position="236"/>
        <end position="239"/>
    </location>
    <ligand>
        <name>pyridoxal 5'-phosphate</name>
        <dbReference type="ChEBI" id="CHEBI:597326"/>
    </ligand>
</feature>
<feature type="binding site" evidence="1">
    <location>
        <position position="352"/>
    </location>
    <ligand>
        <name>substrate</name>
    </ligand>
</feature>
<feature type="modified residue" description="N6-(pyridoxal phosphate)lysine" evidence="1">
    <location>
        <position position="239"/>
    </location>
</feature>
<proteinExistence type="inferred from homology"/>
<accession>A1ITK1</accession>
<reference key="1">
    <citation type="journal article" date="2000" name="Nature">
        <title>Complete DNA sequence of a serogroup A strain of Neisseria meningitidis Z2491.</title>
        <authorList>
            <person name="Parkhill J."/>
            <person name="Achtman M."/>
            <person name="James K.D."/>
            <person name="Bentley S.D."/>
            <person name="Churcher C.M."/>
            <person name="Klee S.R."/>
            <person name="Morelli G."/>
            <person name="Basham D."/>
            <person name="Brown D."/>
            <person name="Chillingworth T."/>
            <person name="Davies R.M."/>
            <person name="Davis P."/>
            <person name="Devlin K."/>
            <person name="Feltwell T."/>
            <person name="Hamlin N."/>
            <person name="Holroyd S."/>
            <person name="Jagels K."/>
            <person name="Leather S."/>
            <person name="Moule S."/>
            <person name="Mungall K.L."/>
            <person name="Quail M.A."/>
            <person name="Rajandream M.A."/>
            <person name="Rutherford K.M."/>
            <person name="Simmonds M."/>
            <person name="Skelton J."/>
            <person name="Whitehead S."/>
            <person name="Spratt B.G."/>
            <person name="Barrell B.G."/>
        </authorList>
    </citation>
    <scope>NUCLEOTIDE SEQUENCE [LARGE SCALE GENOMIC DNA]</scope>
    <source>
        <strain>DSM 15465 / Z2491</strain>
    </source>
</reference>
<sequence>MKVFKQQLEQLGAQNQYRSIPDLIHQGRYITRENCKMLNMSSNDYLGLASDENLRRSFLQQYGGNFPSFTSSSSRLLTGNFPIYTDLEELVAQRFQRESALLFNSGYHANLGILPALTTTKSLILADKFVHASMIDGIRLSRCAFFRYRHNDYEHLKNLLEKNVGKFDRTFIVTESVFSMDGDVADLKQLVQLKKQFPNTYLYVDEAHAIGVYGQNGLGIAERDNLIAEIDLLVGTFGKALASVGAYAVCNQVLKECLINQMRPLIFSTALPPFNVAWTYFIFERLPQFSKERSHLEQLSAFLRREVAHRTQIMPSQTCIVPYILGGNEATLAKAEYLQRQGYYCLPIRPPTVPKGTSRIRLSLTADMTMDEVRQFAACL</sequence>